<gene>
    <name type="primary">SACM1L</name>
    <name evidence="1" type="synonym">SAC1</name>
</gene>
<organism>
    <name type="scientific">Bos taurus</name>
    <name type="common">Bovine</name>
    <dbReference type="NCBI Taxonomy" id="9913"/>
    <lineage>
        <taxon>Eukaryota</taxon>
        <taxon>Metazoa</taxon>
        <taxon>Chordata</taxon>
        <taxon>Craniata</taxon>
        <taxon>Vertebrata</taxon>
        <taxon>Euteleostomi</taxon>
        <taxon>Mammalia</taxon>
        <taxon>Eutheria</taxon>
        <taxon>Laurasiatheria</taxon>
        <taxon>Artiodactyla</taxon>
        <taxon>Ruminantia</taxon>
        <taxon>Pecora</taxon>
        <taxon>Bovidae</taxon>
        <taxon>Bovinae</taxon>
        <taxon>Bos</taxon>
    </lineage>
</organism>
<accession>A6QL88</accession>
<name>SAC1_BOVIN</name>
<protein>
    <recommendedName>
        <fullName>Phosphatidylinositol-3-phosphatase SAC1</fullName>
        <ecNumber evidence="1">3.1.3.64</ecNumber>
    </recommendedName>
    <alternativeName>
        <fullName evidence="1">Phosphatidylinositol-4-phosphate phosphatase</fullName>
    </alternativeName>
    <alternativeName>
        <fullName>Suppressor of actin mutations 1-like protein</fullName>
    </alternativeName>
</protein>
<comment type="function">
    <text evidence="1 2">Phosphoinositide phosphatase which catalyzes the hydrolysis of phosphatidylinositol 4-phosphate (PtdIns(4)P), phosphatidylinositol 3-phosphate (PtdIns(3)P) and has low activity towards phosphatidylinositol-3,5-bisphosphate (PtdIns(3,5)P2) (By similarity). Shows a very robust PtdIns(4)P phosphatase activity when it binds PtdIns(4)P in a 'cis' configuration in the cellular environment, with much less activity seen when it binds PtdIns(4)P in 'trans' configuration (By similarity). PtdIns(4)P phosphatase activity (when it binds PtdIns(4)P in 'trans' configuration) is enhanced in the presence of PLEKHA3 (By similarity).</text>
</comment>
<comment type="catalytic activity">
    <reaction evidence="1">
        <text>a 1,2-diacyl-sn-glycero-3-phospho-(1D-myo-inositol-3-phosphate) + H2O = a 1,2-diacyl-sn-glycero-3-phospho-(1D-myo-inositol) + phosphate</text>
        <dbReference type="Rhea" id="RHEA:12316"/>
        <dbReference type="ChEBI" id="CHEBI:15377"/>
        <dbReference type="ChEBI" id="CHEBI:43474"/>
        <dbReference type="ChEBI" id="CHEBI:57880"/>
        <dbReference type="ChEBI" id="CHEBI:58088"/>
        <dbReference type="EC" id="3.1.3.64"/>
    </reaction>
    <physiologicalReaction direction="left-to-right" evidence="1">
        <dbReference type="Rhea" id="RHEA:12317"/>
    </physiologicalReaction>
</comment>
<comment type="catalytic activity">
    <reaction evidence="1">
        <text>a 1,2-diacyl-sn-glycero-3-phospho-(1D-myo-inositol 4-phosphate) + H2O = a 1,2-diacyl-sn-glycero-3-phospho-(1D-myo-inositol) + phosphate</text>
        <dbReference type="Rhea" id="RHEA:55652"/>
        <dbReference type="ChEBI" id="CHEBI:15377"/>
        <dbReference type="ChEBI" id="CHEBI:43474"/>
        <dbReference type="ChEBI" id="CHEBI:57880"/>
        <dbReference type="ChEBI" id="CHEBI:58178"/>
    </reaction>
    <physiologicalReaction direction="left-to-right" evidence="1">
        <dbReference type="Rhea" id="RHEA:55653"/>
    </physiologicalReaction>
</comment>
<comment type="subunit">
    <text evidence="2">Interacts with TMEM39A (By similarity). Interacts with SEC23A and SEC24A; this interaction is reduced in the absence of TMEM39A (By similarity). Interacts with PLEKHA3 and VAPA and/or VAPB to form a ternary complex (By similarity).</text>
</comment>
<comment type="subcellular location">
    <subcellularLocation>
        <location evidence="1">Endoplasmic reticulum membrane</location>
        <topology evidence="3">Multi-pass membrane protein</topology>
    </subcellularLocation>
    <subcellularLocation>
        <location evidence="2">Golgi apparatus membrane</location>
        <topology evidence="3">Multi-pass membrane protein</topology>
    </subcellularLocation>
    <text evidence="2">Trafficking between the ER and Golgi is regulated by nutrient status and by TMEM39A. Localizes to endoplasmic reticulum-plasma membrane contact sites (EPCS) in the presence of phosphatidylinositol-4,5-bisphosphate.</text>
</comment>
<sequence length="587" mass="67093">MAATTYERLKLHVTPEKFYVEACDDGADDVLIIDRVSTEVTLSVKKDIPPSAVTRPIFGILGTIHLVAGNYLIVITKKKKIGEFFNHVIWKATDFDVLSYKKTMLHLTDIQLQDNKTFLAMMNHVLSMDGFYFSTTYDLTHTLQRLSNTSPEFQEMSLLERADQRFVWNGHLLRELSAQPEVHRFALPVLHGFITMHSCSINGKYFDWILISRRSCFRAGVRYYVRGIDSEGHAANFVETEQIVHYNGSRASFVQTRGSIPLYWSQRPNLKYKPLPLINKVANHMDGFQRHFDSQIIIYGKQVIINLVNQKGSEKPLEQAFATMVSSLGNGMIRYIAFDFHKECKNMRWDRLSILLDQVAEMQDELSYFLVDPAGVVLSTQEGVFRSNCMDCLDRTNVIQSLLARRSLQAQLQRLGVLHVGQKLEEQDEFEKIYKNAWADNANACAKQYAGTGALKTDFTRTGKRTQLGLIMDGWNSLIRYYKNNFSDGFRQDSIDLFLGNYSVDELESHSPLSVPRDLKFLALPIIMVVAFSMCIICLLMAGDTWTETLAYVLFWGVASIGTFFIILYNGKDFVDAPRLVQKEKID</sequence>
<reference key="1">
    <citation type="submission" date="2007-06" db="EMBL/GenBank/DDBJ databases">
        <authorList>
            <consortium name="NIH - Mammalian Gene Collection (MGC) project"/>
        </authorList>
    </citation>
    <scope>NUCLEOTIDE SEQUENCE [LARGE SCALE MRNA]</scope>
    <source>
        <strain>Hereford</strain>
        <tissue>Fetal medulla</tissue>
    </source>
</reference>
<evidence type="ECO:0000250" key="1">
    <source>
        <dbReference type="UniProtKB" id="Q9ES21"/>
    </source>
</evidence>
<evidence type="ECO:0000250" key="2">
    <source>
        <dbReference type="UniProtKB" id="Q9NTJ5"/>
    </source>
</evidence>
<evidence type="ECO:0000255" key="3"/>
<evidence type="ECO:0000255" key="4">
    <source>
        <dbReference type="PROSITE-ProRule" id="PRU00183"/>
    </source>
</evidence>
<proteinExistence type="evidence at transcript level"/>
<keyword id="KW-0007">Acetylation</keyword>
<keyword id="KW-0256">Endoplasmic reticulum</keyword>
<keyword id="KW-0333">Golgi apparatus</keyword>
<keyword id="KW-0378">Hydrolase</keyword>
<keyword id="KW-0443">Lipid metabolism</keyword>
<keyword id="KW-0472">Membrane</keyword>
<keyword id="KW-1185">Reference proteome</keyword>
<keyword id="KW-0812">Transmembrane</keyword>
<keyword id="KW-1133">Transmembrane helix</keyword>
<feature type="chain" id="PRO_0000317170" description="Phosphatidylinositol-3-phosphatase SAC1">
    <location>
        <begin position="1"/>
        <end position="587"/>
    </location>
</feature>
<feature type="topological domain" description="Cytoplasmic" evidence="1">
    <location>
        <begin position="1"/>
        <end position="520"/>
    </location>
</feature>
<feature type="transmembrane region" description="Helical" evidence="3">
    <location>
        <begin position="521"/>
        <end position="541"/>
    </location>
</feature>
<feature type="topological domain" description="Lumenal" evidence="1">
    <location>
        <begin position="542"/>
        <end position="548"/>
    </location>
</feature>
<feature type="transmembrane region" description="Helical" evidence="3">
    <location>
        <begin position="549"/>
        <end position="569"/>
    </location>
</feature>
<feature type="topological domain" description="Cytoplasmic" evidence="1">
    <location>
        <begin position="570"/>
        <end position="587"/>
    </location>
</feature>
<feature type="domain" description="SAC" evidence="4">
    <location>
        <begin position="122"/>
        <end position="451"/>
    </location>
</feature>
<feature type="region of interest" description="Essential for phosphatidylinositol-4-phosphate phosphatase activity" evidence="2">
    <location>
        <begin position="452"/>
        <end position="587"/>
    </location>
</feature>
<feature type="modified residue" description="N6-acetyllysine" evidence="2">
    <location>
        <position position="456"/>
    </location>
</feature>
<dbReference type="EC" id="3.1.3.64" evidence="1"/>
<dbReference type="EMBL" id="BC147878">
    <property type="protein sequence ID" value="AAI47879.1"/>
    <property type="molecule type" value="mRNA"/>
</dbReference>
<dbReference type="RefSeq" id="NP_001095601.1">
    <property type="nucleotide sequence ID" value="NM_001102131.3"/>
</dbReference>
<dbReference type="SMR" id="A6QL88"/>
<dbReference type="FunCoup" id="A6QL88">
    <property type="interactions" value="5278"/>
</dbReference>
<dbReference type="STRING" id="9913.ENSBTAP00000004549"/>
<dbReference type="PaxDb" id="9913-ENSBTAP00000004549"/>
<dbReference type="Ensembl" id="ENSBTAT00000004549.6">
    <property type="protein sequence ID" value="ENSBTAP00000004549.5"/>
    <property type="gene ID" value="ENSBTAG00000003501.7"/>
</dbReference>
<dbReference type="GeneID" id="530577"/>
<dbReference type="KEGG" id="bta:530577"/>
<dbReference type="CTD" id="22908"/>
<dbReference type="VEuPathDB" id="HostDB:ENSBTAG00000003501"/>
<dbReference type="VGNC" id="VGNC:34259">
    <property type="gene designation" value="SACM1L"/>
</dbReference>
<dbReference type="eggNOG" id="KOG1889">
    <property type="taxonomic scope" value="Eukaryota"/>
</dbReference>
<dbReference type="GeneTree" id="ENSGT00940000155579"/>
<dbReference type="HOGENOM" id="CLU_003016_7_4_1"/>
<dbReference type="InParanoid" id="A6QL88"/>
<dbReference type="OMA" id="ITKAQPV"/>
<dbReference type="OrthoDB" id="405996at2759"/>
<dbReference type="TreeFam" id="TF313543"/>
<dbReference type="Reactome" id="R-BTA-1483248">
    <property type="pathway name" value="Synthesis of PIPs at the ER membrane"/>
</dbReference>
<dbReference type="Reactome" id="R-BTA-1660514">
    <property type="pathway name" value="Synthesis of PIPs at the Golgi membrane"/>
</dbReference>
<dbReference type="Proteomes" id="UP000009136">
    <property type="component" value="Chromosome 22"/>
</dbReference>
<dbReference type="Bgee" id="ENSBTAG00000003501">
    <property type="expression patterns" value="Expressed in spiral colon and 106 other cell types or tissues"/>
</dbReference>
<dbReference type="GO" id="GO:0032281">
    <property type="term" value="C:AMPA glutamate receptor complex"/>
    <property type="evidence" value="ECO:0007669"/>
    <property type="project" value="Ensembl"/>
</dbReference>
<dbReference type="GO" id="GO:0005783">
    <property type="term" value="C:endoplasmic reticulum"/>
    <property type="evidence" value="ECO:0000318"/>
    <property type="project" value="GO_Central"/>
</dbReference>
<dbReference type="GO" id="GO:0005789">
    <property type="term" value="C:endoplasmic reticulum membrane"/>
    <property type="evidence" value="ECO:0000250"/>
    <property type="project" value="UniProtKB"/>
</dbReference>
<dbReference type="GO" id="GO:0140268">
    <property type="term" value="C:endoplasmic reticulum-plasma membrane contact site"/>
    <property type="evidence" value="ECO:0000250"/>
    <property type="project" value="UniProtKB"/>
</dbReference>
<dbReference type="GO" id="GO:0098978">
    <property type="term" value="C:glutamatergic synapse"/>
    <property type="evidence" value="ECO:0007669"/>
    <property type="project" value="Ensembl"/>
</dbReference>
<dbReference type="GO" id="GO:0005794">
    <property type="term" value="C:Golgi apparatus"/>
    <property type="evidence" value="ECO:0000250"/>
    <property type="project" value="UniProtKB"/>
</dbReference>
<dbReference type="GO" id="GO:0000139">
    <property type="term" value="C:Golgi membrane"/>
    <property type="evidence" value="ECO:0000250"/>
    <property type="project" value="UniProtKB"/>
</dbReference>
<dbReference type="GO" id="GO:0016791">
    <property type="term" value="F:phosphatase activity"/>
    <property type="evidence" value="ECO:0000250"/>
    <property type="project" value="UniProtKB"/>
</dbReference>
<dbReference type="GO" id="GO:0004438">
    <property type="term" value="F:phosphatidylinositol-3-phosphate phosphatase activity"/>
    <property type="evidence" value="ECO:0007669"/>
    <property type="project" value="UniProtKB-EC"/>
</dbReference>
<dbReference type="GO" id="GO:0043812">
    <property type="term" value="F:phosphatidylinositol-4-phosphate phosphatase activity"/>
    <property type="evidence" value="ECO:0000250"/>
    <property type="project" value="UniProtKB"/>
</dbReference>
<dbReference type="GO" id="GO:0098967">
    <property type="term" value="P:exocytic insertion of neurotransmitter receptor to postsynaptic membrane"/>
    <property type="evidence" value="ECO:0007669"/>
    <property type="project" value="Ensembl"/>
</dbReference>
<dbReference type="GO" id="GO:0046856">
    <property type="term" value="P:phosphatidylinositol dephosphorylation"/>
    <property type="evidence" value="ECO:0000250"/>
    <property type="project" value="UniProtKB"/>
</dbReference>
<dbReference type="GO" id="GO:0099003">
    <property type="term" value="P:vesicle-mediated transport in synapse"/>
    <property type="evidence" value="ECO:0007669"/>
    <property type="project" value="Ensembl"/>
</dbReference>
<dbReference type="InterPro" id="IPR002013">
    <property type="entry name" value="SAC_dom"/>
</dbReference>
<dbReference type="PANTHER" id="PTHR45662">
    <property type="entry name" value="PHOSPHATIDYLINOSITIDE PHOSPHATASE SAC1"/>
    <property type="match status" value="1"/>
</dbReference>
<dbReference type="PANTHER" id="PTHR45662:SF2">
    <property type="entry name" value="PHOSPHATIDYLINOSITOL-3-PHOSPHATASE SAC1"/>
    <property type="match status" value="1"/>
</dbReference>
<dbReference type="Pfam" id="PF02383">
    <property type="entry name" value="Syja_N"/>
    <property type="match status" value="1"/>
</dbReference>
<dbReference type="PROSITE" id="PS50275">
    <property type="entry name" value="SAC"/>
    <property type="match status" value="1"/>
</dbReference>